<gene>
    <name type="primary">SXL</name>
</gene>
<organism>
    <name type="scientific">Musca domestica</name>
    <name type="common">House fly</name>
    <dbReference type="NCBI Taxonomy" id="7370"/>
    <lineage>
        <taxon>Eukaryota</taxon>
        <taxon>Metazoa</taxon>
        <taxon>Ecdysozoa</taxon>
        <taxon>Arthropoda</taxon>
        <taxon>Hexapoda</taxon>
        <taxon>Insecta</taxon>
        <taxon>Pterygota</taxon>
        <taxon>Neoptera</taxon>
        <taxon>Endopterygota</taxon>
        <taxon>Diptera</taxon>
        <taxon>Brachycera</taxon>
        <taxon>Muscomorpha</taxon>
        <taxon>Muscoidea</taxon>
        <taxon>Muscidae</taxon>
        <taxon>Musca</taxon>
    </lineage>
</organism>
<reference key="1">
    <citation type="journal article" date="1998" name="Development">
        <title>Sex-lethal, the master sex-determining gene in Drosophila, is not sex-specifically regulated in Musca domestica.</title>
        <authorList>
            <person name="Meise M."/>
            <person name="Hilfiker-Kleiner D."/>
            <person name="Duebendorfer A."/>
            <person name="Brunner C."/>
            <person name="Noethiger R."/>
            <person name="Bopp D."/>
        </authorList>
    </citation>
    <scope>NUCLEOTIDE SEQUENCE [MRNA] (ISOFORMS SXLC1 AND SXLC2)</scope>
    <scope>FUNCTION</scope>
    <scope>SUBCELLULAR LOCATION</scope>
    <scope>TISSUE SPECIFICITY</scope>
    <scope>DEVELOPMENTAL STAGE</scope>
    <source>
        <tissue>Ovary</tissue>
    </source>
</reference>
<keyword id="KW-0025">Alternative splicing</keyword>
<keyword id="KW-0539">Nucleus</keyword>
<keyword id="KW-1185">Reference proteome</keyword>
<keyword id="KW-0677">Repeat</keyword>
<keyword id="KW-0694">RNA-binding</keyword>
<sequence>MYGQNVRNVSYYPPYGYNGYKQSGERMWRMSHSLPSGMDTDFTSSYPGPSAMNPRGRGGYNDFSGGGSAMGSMCNMAPAQSTNSLNSGGDGGGGDTQAVNGTNLIVNYLPQDMTDRELYALFRTCGPINTCRIMKDYKTGYSFGYAFVDFASEIDAQNAIKTVNGITVRNKRLKVSYARPGGESIKDTNLYVTNLPRTITDDELEKIFGKYGNIVQKNILRDKLTGRPRGVAFVRFNKREEAQEAISALNNVIPEGASQPLTVRLAEEHGKMKAHHFMNQLGMGPPAAPIPAAGPGYNNMVHRGRQNKMRNHKVHPYHNPQKFI</sequence>
<protein>
    <recommendedName>
        <fullName>Sex-lethal homolog</fullName>
    </recommendedName>
</protein>
<feature type="chain" id="PRO_0000081970" description="Sex-lethal homolog">
    <location>
        <begin position="1"/>
        <end position="324"/>
    </location>
</feature>
<feature type="domain" description="RRM 1" evidence="1">
    <location>
        <begin position="102"/>
        <end position="180"/>
    </location>
</feature>
<feature type="domain" description="RRM 2" evidence="1">
    <location>
        <begin position="188"/>
        <end position="268"/>
    </location>
</feature>
<feature type="splice variant" id="VSP_005891" description="In isoform SXLC1." evidence="3">
    <original>GRQNKMRNHKVHPYHNPQKFI</original>
    <variation>AYNYSGLLDGFYRNKSYHYPYL</variation>
    <location>
        <begin position="304"/>
        <end position="324"/>
    </location>
</feature>
<feature type="sequence conflict" description="In Ref. 1; AAB81985." evidence="4" ref="1">
    <original>NV</original>
    <variation>GT</variation>
    <location>
        <begin position="8"/>
        <end position="9"/>
    </location>
</feature>
<comment type="function">
    <text evidence="2">Unknown; apparently not involved in somatic sex determination.</text>
</comment>
<comment type="subcellular location">
    <subcellularLocation>
        <location evidence="2">Nucleus</location>
    </subcellularLocation>
</comment>
<comment type="alternative products">
    <event type="alternative splicing"/>
    <isoform>
        <id>O17310-1</id>
        <name>SXLC2</name>
        <sequence type="displayed"/>
    </isoform>
    <isoform>
        <id>O17310-2</id>
        <name>SXLC1</name>
        <sequence type="described" ref="VSP_005891"/>
    </isoform>
    <text>Additional isoforms seem to exist.</text>
</comment>
<comment type="tissue specificity">
    <text evidence="2">Expressed in somatic cells of both sexes throughout development, but not in the pole cells which are the progenitors of the germline.</text>
</comment>
<comment type="developmental stage">
    <text evidence="2">First appears in blastoderm embryos after onset of cellularisation.</text>
</comment>
<dbReference type="EMBL" id="AF025689">
    <property type="protein sequence ID" value="AAB81985.1"/>
    <property type="molecule type" value="mRNA"/>
</dbReference>
<dbReference type="EMBL" id="AF025690">
    <property type="protein sequence ID" value="AAB81986.1"/>
    <property type="molecule type" value="mRNA"/>
</dbReference>
<dbReference type="RefSeq" id="NP_001274464.1">
    <molecule id="O17310-1"/>
    <property type="nucleotide sequence ID" value="NM_001287535.1"/>
</dbReference>
<dbReference type="SMR" id="O17310"/>
<dbReference type="STRING" id="7370.O17310"/>
<dbReference type="EnsemblMetazoa" id="MDOA004484-RA">
    <molecule id="O17310-2"/>
    <property type="protein sequence ID" value="MDOA004484-PA"/>
    <property type="gene ID" value="MDOA004484"/>
</dbReference>
<dbReference type="EnsemblMetazoa" id="MDOA004484-RD">
    <molecule id="O17310-1"/>
    <property type="protein sequence ID" value="MDOA004484-PD"/>
    <property type="gene ID" value="MDOA004484"/>
</dbReference>
<dbReference type="GeneID" id="101898639"/>
<dbReference type="KEGG" id="mde:101898639"/>
<dbReference type="CTD" id="3772180"/>
<dbReference type="VEuPathDB" id="VectorBase:MDOA004484"/>
<dbReference type="VEuPathDB" id="VectorBase:MDOMA2_005327"/>
<dbReference type="VEuPathDB" id="VectorBase:MDOMA2_015213"/>
<dbReference type="eggNOG" id="KOG0118">
    <property type="taxonomic scope" value="Eukaryota"/>
</dbReference>
<dbReference type="OrthoDB" id="266020at2759"/>
<dbReference type="Proteomes" id="UP000694905">
    <property type="component" value="Unplaced"/>
</dbReference>
<dbReference type="GO" id="GO:0005634">
    <property type="term" value="C:nucleus"/>
    <property type="evidence" value="ECO:0007669"/>
    <property type="project" value="UniProtKB-SubCell"/>
</dbReference>
<dbReference type="GO" id="GO:1990904">
    <property type="term" value="C:ribonucleoprotein complex"/>
    <property type="evidence" value="ECO:0007669"/>
    <property type="project" value="InterPro"/>
</dbReference>
<dbReference type="GO" id="GO:0003729">
    <property type="term" value="F:mRNA binding"/>
    <property type="evidence" value="ECO:0007669"/>
    <property type="project" value="TreeGrafter"/>
</dbReference>
<dbReference type="GO" id="GO:0000380">
    <property type="term" value="P:alternative mRNA splicing, via spliceosome"/>
    <property type="evidence" value="ECO:0007669"/>
    <property type="project" value="InterPro"/>
</dbReference>
<dbReference type="GO" id="GO:0007530">
    <property type="term" value="P:sex determination"/>
    <property type="evidence" value="ECO:0007669"/>
    <property type="project" value="InterPro"/>
</dbReference>
<dbReference type="CDD" id="cd12376">
    <property type="entry name" value="RRM2_Hu_like"/>
    <property type="match status" value="1"/>
</dbReference>
<dbReference type="FunFam" id="3.30.70.330:FF:000205">
    <property type="entry name" value="Sex lethal, isoform B"/>
    <property type="match status" value="1"/>
</dbReference>
<dbReference type="FunFam" id="3.30.70.330:FF:000383">
    <property type="entry name" value="Sex lethal, isoform D"/>
    <property type="match status" value="1"/>
</dbReference>
<dbReference type="Gene3D" id="3.30.70.330">
    <property type="match status" value="2"/>
</dbReference>
<dbReference type="InterPro" id="IPR050502">
    <property type="entry name" value="Euk_RNA-bind_prot"/>
</dbReference>
<dbReference type="InterPro" id="IPR002343">
    <property type="entry name" value="Hud_Sxl_RNA"/>
</dbReference>
<dbReference type="InterPro" id="IPR012677">
    <property type="entry name" value="Nucleotide-bd_a/b_plait_sf"/>
</dbReference>
<dbReference type="InterPro" id="IPR035979">
    <property type="entry name" value="RBD_domain_sf"/>
</dbReference>
<dbReference type="InterPro" id="IPR000504">
    <property type="entry name" value="RRM_dom"/>
</dbReference>
<dbReference type="InterPro" id="IPR006546">
    <property type="entry name" value="Sxl"/>
</dbReference>
<dbReference type="NCBIfam" id="TIGR01659">
    <property type="entry name" value="sex-lethal"/>
    <property type="match status" value="1"/>
</dbReference>
<dbReference type="PANTHER" id="PTHR48025">
    <property type="entry name" value="OS02G0815200 PROTEIN"/>
    <property type="match status" value="1"/>
</dbReference>
<dbReference type="PANTHER" id="PTHR48025:SF1">
    <property type="entry name" value="RRM DOMAIN-CONTAINING PROTEIN"/>
    <property type="match status" value="1"/>
</dbReference>
<dbReference type="Pfam" id="PF00076">
    <property type="entry name" value="RRM_1"/>
    <property type="match status" value="2"/>
</dbReference>
<dbReference type="PRINTS" id="PR00961">
    <property type="entry name" value="HUDSXLRNA"/>
</dbReference>
<dbReference type="SMART" id="SM00360">
    <property type="entry name" value="RRM"/>
    <property type="match status" value="2"/>
</dbReference>
<dbReference type="SUPFAM" id="SSF54928">
    <property type="entry name" value="RNA-binding domain, RBD"/>
    <property type="match status" value="1"/>
</dbReference>
<dbReference type="PROSITE" id="PS50102">
    <property type="entry name" value="RRM"/>
    <property type="match status" value="2"/>
</dbReference>
<accession>O17310</accession>
<accession>O17309</accession>
<evidence type="ECO:0000255" key="1">
    <source>
        <dbReference type="PROSITE-ProRule" id="PRU00176"/>
    </source>
</evidence>
<evidence type="ECO:0000269" key="2">
    <source>
    </source>
</evidence>
<evidence type="ECO:0000303" key="3">
    <source>
    </source>
</evidence>
<evidence type="ECO:0000305" key="4"/>
<name>SXL_MUSDO</name>
<proteinExistence type="evidence at transcript level"/>